<name>DER_MYCVP</name>
<evidence type="ECO:0000255" key="1">
    <source>
        <dbReference type="HAMAP-Rule" id="MF_00195"/>
    </source>
</evidence>
<feature type="chain" id="PRO_1000011674" description="GTPase Der">
    <location>
        <begin position="1"/>
        <end position="470"/>
    </location>
</feature>
<feature type="domain" description="EngA-type G 1">
    <location>
        <begin position="32"/>
        <end position="195"/>
    </location>
</feature>
<feature type="domain" description="EngA-type G 2">
    <location>
        <begin position="206"/>
        <end position="379"/>
    </location>
</feature>
<feature type="domain" description="KH-like" evidence="1">
    <location>
        <begin position="380"/>
        <end position="462"/>
    </location>
</feature>
<feature type="binding site" evidence="1">
    <location>
        <begin position="38"/>
        <end position="45"/>
    </location>
    <ligand>
        <name>GTP</name>
        <dbReference type="ChEBI" id="CHEBI:37565"/>
        <label>1</label>
    </ligand>
</feature>
<feature type="binding site" evidence="1">
    <location>
        <begin position="85"/>
        <end position="89"/>
    </location>
    <ligand>
        <name>GTP</name>
        <dbReference type="ChEBI" id="CHEBI:37565"/>
        <label>1</label>
    </ligand>
</feature>
<feature type="binding site" evidence="1">
    <location>
        <begin position="147"/>
        <end position="150"/>
    </location>
    <ligand>
        <name>GTP</name>
        <dbReference type="ChEBI" id="CHEBI:37565"/>
        <label>1</label>
    </ligand>
</feature>
<feature type="binding site" evidence="1">
    <location>
        <begin position="212"/>
        <end position="219"/>
    </location>
    <ligand>
        <name>GTP</name>
        <dbReference type="ChEBI" id="CHEBI:37565"/>
        <label>2</label>
    </ligand>
</feature>
<feature type="binding site" evidence="1">
    <location>
        <begin position="259"/>
        <end position="263"/>
    </location>
    <ligand>
        <name>GTP</name>
        <dbReference type="ChEBI" id="CHEBI:37565"/>
        <label>2</label>
    </ligand>
</feature>
<feature type="binding site" evidence="1">
    <location>
        <begin position="324"/>
        <end position="327"/>
    </location>
    <ligand>
        <name>GTP</name>
        <dbReference type="ChEBI" id="CHEBI:37565"/>
        <label>2</label>
    </ligand>
</feature>
<dbReference type="EMBL" id="CP000511">
    <property type="protein sequence ID" value="ABM14072.1"/>
    <property type="molecule type" value="Genomic_DNA"/>
</dbReference>
<dbReference type="RefSeq" id="WP_011780477.1">
    <property type="nucleotide sequence ID" value="NC_008726.1"/>
</dbReference>
<dbReference type="SMR" id="A1TA72"/>
<dbReference type="STRING" id="350058.Mvan_3274"/>
<dbReference type="KEGG" id="mva:Mvan_3274"/>
<dbReference type="eggNOG" id="COG1160">
    <property type="taxonomic scope" value="Bacteria"/>
</dbReference>
<dbReference type="HOGENOM" id="CLU_016077_5_0_11"/>
<dbReference type="Proteomes" id="UP000009159">
    <property type="component" value="Chromosome"/>
</dbReference>
<dbReference type="GO" id="GO:0016887">
    <property type="term" value="F:ATP hydrolysis activity"/>
    <property type="evidence" value="ECO:0007669"/>
    <property type="project" value="InterPro"/>
</dbReference>
<dbReference type="GO" id="GO:0005525">
    <property type="term" value="F:GTP binding"/>
    <property type="evidence" value="ECO:0007669"/>
    <property type="project" value="UniProtKB-UniRule"/>
</dbReference>
<dbReference type="GO" id="GO:0043022">
    <property type="term" value="F:ribosome binding"/>
    <property type="evidence" value="ECO:0007669"/>
    <property type="project" value="TreeGrafter"/>
</dbReference>
<dbReference type="GO" id="GO:0042254">
    <property type="term" value="P:ribosome biogenesis"/>
    <property type="evidence" value="ECO:0007669"/>
    <property type="project" value="UniProtKB-KW"/>
</dbReference>
<dbReference type="CDD" id="cd01894">
    <property type="entry name" value="EngA1"/>
    <property type="match status" value="1"/>
</dbReference>
<dbReference type="CDD" id="cd01895">
    <property type="entry name" value="EngA2"/>
    <property type="match status" value="1"/>
</dbReference>
<dbReference type="FunFam" id="3.30.300.20:FF:000004">
    <property type="entry name" value="GTPase Der"/>
    <property type="match status" value="1"/>
</dbReference>
<dbReference type="FunFam" id="3.40.50.300:FF:000040">
    <property type="entry name" value="GTPase Der"/>
    <property type="match status" value="1"/>
</dbReference>
<dbReference type="FunFam" id="3.40.50.300:FF:000057">
    <property type="entry name" value="GTPase Der"/>
    <property type="match status" value="1"/>
</dbReference>
<dbReference type="Gene3D" id="3.30.300.20">
    <property type="match status" value="1"/>
</dbReference>
<dbReference type="Gene3D" id="3.40.50.300">
    <property type="entry name" value="P-loop containing nucleotide triphosphate hydrolases"/>
    <property type="match status" value="2"/>
</dbReference>
<dbReference type="HAMAP" id="MF_00195">
    <property type="entry name" value="GTPase_Der"/>
    <property type="match status" value="1"/>
</dbReference>
<dbReference type="InterPro" id="IPR003593">
    <property type="entry name" value="AAA+_ATPase"/>
</dbReference>
<dbReference type="InterPro" id="IPR031166">
    <property type="entry name" value="G_ENGA"/>
</dbReference>
<dbReference type="InterPro" id="IPR006073">
    <property type="entry name" value="GTP-bd"/>
</dbReference>
<dbReference type="InterPro" id="IPR016484">
    <property type="entry name" value="GTPase_Der"/>
</dbReference>
<dbReference type="InterPro" id="IPR032859">
    <property type="entry name" value="KH_dom-like"/>
</dbReference>
<dbReference type="InterPro" id="IPR015946">
    <property type="entry name" value="KH_dom-like_a/b"/>
</dbReference>
<dbReference type="InterPro" id="IPR027417">
    <property type="entry name" value="P-loop_NTPase"/>
</dbReference>
<dbReference type="InterPro" id="IPR005225">
    <property type="entry name" value="Small_GTP-bd"/>
</dbReference>
<dbReference type="NCBIfam" id="TIGR03594">
    <property type="entry name" value="GTPase_EngA"/>
    <property type="match status" value="1"/>
</dbReference>
<dbReference type="NCBIfam" id="NF002828">
    <property type="entry name" value="PRK03003.1"/>
    <property type="match status" value="1"/>
</dbReference>
<dbReference type="NCBIfam" id="TIGR00231">
    <property type="entry name" value="small_GTP"/>
    <property type="match status" value="2"/>
</dbReference>
<dbReference type="PANTHER" id="PTHR43834">
    <property type="entry name" value="GTPASE DER"/>
    <property type="match status" value="1"/>
</dbReference>
<dbReference type="PANTHER" id="PTHR43834:SF6">
    <property type="entry name" value="GTPASE DER"/>
    <property type="match status" value="1"/>
</dbReference>
<dbReference type="Pfam" id="PF14714">
    <property type="entry name" value="KH_dom-like"/>
    <property type="match status" value="1"/>
</dbReference>
<dbReference type="Pfam" id="PF01926">
    <property type="entry name" value="MMR_HSR1"/>
    <property type="match status" value="2"/>
</dbReference>
<dbReference type="PIRSF" id="PIRSF006485">
    <property type="entry name" value="GTP-binding_EngA"/>
    <property type="match status" value="1"/>
</dbReference>
<dbReference type="PRINTS" id="PR00326">
    <property type="entry name" value="GTP1OBG"/>
</dbReference>
<dbReference type="SMART" id="SM00382">
    <property type="entry name" value="AAA"/>
    <property type="match status" value="2"/>
</dbReference>
<dbReference type="SUPFAM" id="SSF52540">
    <property type="entry name" value="P-loop containing nucleoside triphosphate hydrolases"/>
    <property type="match status" value="2"/>
</dbReference>
<dbReference type="PROSITE" id="PS51712">
    <property type="entry name" value="G_ENGA"/>
    <property type="match status" value="2"/>
</dbReference>
<reference key="1">
    <citation type="submission" date="2006-12" db="EMBL/GenBank/DDBJ databases">
        <title>Complete sequence of Mycobacterium vanbaalenii PYR-1.</title>
        <authorList>
            <consortium name="US DOE Joint Genome Institute"/>
            <person name="Copeland A."/>
            <person name="Lucas S."/>
            <person name="Lapidus A."/>
            <person name="Barry K."/>
            <person name="Detter J.C."/>
            <person name="Glavina del Rio T."/>
            <person name="Hammon N."/>
            <person name="Israni S."/>
            <person name="Dalin E."/>
            <person name="Tice H."/>
            <person name="Pitluck S."/>
            <person name="Singan V."/>
            <person name="Schmutz J."/>
            <person name="Larimer F."/>
            <person name="Land M."/>
            <person name="Hauser L."/>
            <person name="Kyrpides N."/>
            <person name="Anderson I.J."/>
            <person name="Miller C."/>
            <person name="Richardson P."/>
        </authorList>
    </citation>
    <scope>NUCLEOTIDE SEQUENCE [LARGE SCALE GENOMIC DNA]</scope>
    <source>
        <strain>DSM 7251 / JCM 13017 / BCRC 16820 / KCTC 9966 / NRRL B-24157 / PYR-1</strain>
    </source>
</reference>
<comment type="function">
    <text evidence="1">GTPase that plays an essential role in the late steps of ribosome biogenesis.</text>
</comment>
<comment type="subunit">
    <text evidence="1">Associates with the 50S ribosomal subunit.</text>
</comment>
<comment type="similarity">
    <text evidence="1">Belongs to the TRAFAC class TrmE-Era-EngA-EngB-Septin-like GTPase superfamily. EngA (Der) GTPase family.</text>
</comment>
<protein>
    <recommendedName>
        <fullName evidence="1">GTPase Der</fullName>
    </recommendedName>
    <alternativeName>
        <fullName evidence="1">GTP-binding protein EngA</fullName>
    </alternativeName>
</protein>
<proteinExistence type="inferred from homology"/>
<sequence>MTDDGTWSDESDWELGPDDISDAIEEVSAPPPVVAVVGRPNVGKSTLVNRILGRREAVVQDVPGVTRDRVSYDASWSGQRFMVQDTGGWEPDAKGLQQLVAEQASVAMRTADAIIFVVDSVVGATAADEAAAKLLQRSGKPVFLAANKVDNERGEADAAALWSLGLGEPHPISAMHGRGVADLLDAVVDALPTISEVAGAGGGGPRRVALVGKPNVGKSSLLNRLSGDERSVVHDVAGTTVDPVDSLIEMDGKLWRFVDTAGLRRKVGQASGHEFYASVRTHGAIDAAEVAIVLVDASQPLTEQDQRVLSMVVEAGRALVLAFNKWDLVDEDRRYLLDREIDLQLAQLQWAPRVNISAKTGRAVQKLVPALETALKSWDTRVSTGRLNTFFKEIVAATPPPVRGGKQPRILFATQATARPPTFVLFTTGFLEAGYRRFLERRLRETFGFEGSPIRINVRVREKRGPKARR</sequence>
<gene>
    <name evidence="1" type="primary">der</name>
    <name type="synonym">engA</name>
    <name type="ordered locus">Mvan_3274</name>
</gene>
<organism>
    <name type="scientific">Mycolicibacterium vanbaalenii (strain DSM 7251 / JCM 13017 / BCRC 16820 / KCTC 9966 / NRRL B-24157 / PYR-1)</name>
    <name type="common">Mycobacterium vanbaalenii</name>
    <dbReference type="NCBI Taxonomy" id="350058"/>
    <lineage>
        <taxon>Bacteria</taxon>
        <taxon>Bacillati</taxon>
        <taxon>Actinomycetota</taxon>
        <taxon>Actinomycetes</taxon>
        <taxon>Mycobacteriales</taxon>
        <taxon>Mycobacteriaceae</taxon>
        <taxon>Mycolicibacterium</taxon>
    </lineage>
</organism>
<accession>A1TA72</accession>
<keyword id="KW-0342">GTP-binding</keyword>
<keyword id="KW-0547">Nucleotide-binding</keyword>
<keyword id="KW-0677">Repeat</keyword>
<keyword id="KW-0690">Ribosome biogenesis</keyword>